<organism>
    <name type="scientific">Salmonella dublin (strain CT_02021853)</name>
    <dbReference type="NCBI Taxonomy" id="439851"/>
    <lineage>
        <taxon>Bacteria</taxon>
        <taxon>Pseudomonadati</taxon>
        <taxon>Pseudomonadota</taxon>
        <taxon>Gammaproteobacteria</taxon>
        <taxon>Enterobacterales</taxon>
        <taxon>Enterobacteriaceae</taxon>
        <taxon>Salmonella</taxon>
    </lineage>
</organism>
<protein>
    <recommendedName>
        <fullName evidence="1">Peptide chain release factor 1</fullName>
        <shortName evidence="1">RF-1</shortName>
    </recommendedName>
</protein>
<keyword id="KW-0963">Cytoplasm</keyword>
<keyword id="KW-0488">Methylation</keyword>
<keyword id="KW-0648">Protein biosynthesis</keyword>
<name>RF1_SALDC</name>
<feature type="chain" id="PRO_1000093497" description="Peptide chain release factor 1">
    <location>
        <begin position="1"/>
        <end position="360"/>
    </location>
</feature>
<feature type="region of interest" description="Disordered" evidence="2">
    <location>
        <begin position="284"/>
        <end position="313"/>
    </location>
</feature>
<feature type="modified residue" description="N5-methylglutamine" evidence="1">
    <location>
        <position position="235"/>
    </location>
</feature>
<proteinExistence type="inferred from homology"/>
<comment type="function">
    <text evidence="1">Peptide chain release factor 1 directs the termination of translation in response to the peptide chain termination codons UAG and UAA.</text>
</comment>
<comment type="subcellular location">
    <subcellularLocation>
        <location evidence="1">Cytoplasm</location>
    </subcellularLocation>
</comment>
<comment type="PTM">
    <text evidence="1">Methylated by PrmC. Methylation increases the termination efficiency of RF1.</text>
</comment>
<comment type="similarity">
    <text evidence="1">Belongs to the prokaryotic/mitochondrial release factor family.</text>
</comment>
<gene>
    <name evidence="1" type="primary">prfA</name>
    <name type="ordered locus">SeD_A1547</name>
</gene>
<dbReference type="EMBL" id="CP001144">
    <property type="protein sequence ID" value="ACH73964.1"/>
    <property type="molecule type" value="Genomic_DNA"/>
</dbReference>
<dbReference type="RefSeq" id="WP_000804703.1">
    <property type="nucleotide sequence ID" value="NC_011205.1"/>
</dbReference>
<dbReference type="SMR" id="B5FU19"/>
<dbReference type="KEGG" id="sed:SeD_A1547"/>
<dbReference type="HOGENOM" id="CLU_036856_0_1_6"/>
<dbReference type="Proteomes" id="UP000008322">
    <property type="component" value="Chromosome"/>
</dbReference>
<dbReference type="GO" id="GO:0005737">
    <property type="term" value="C:cytoplasm"/>
    <property type="evidence" value="ECO:0007669"/>
    <property type="project" value="UniProtKB-SubCell"/>
</dbReference>
<dbReference type="GO" id="GO:0016149">
    <property type="term" value="F:translation release factor activity, codon specific"/>
    <property type="evidence" value="ECO:0007669"/>
    <property type="project" value="UniProtKB-UniRule"/>
</dbReference>
<dbReference type="FunFam" id="3.30.160.20:FF:000004">
    <property type="entry name" value="Peptide chain release factor 1"/>
    <property type="match status" value="1"/>
</dbReference>
<dbReference type="FunFam" id="3.30.70.1660:FF:000002">
    <property type="entry name" value="Peptide chain release factor 1"/>
    <property type="match status" value="1"/>
</dbReference>
<dbReference type="FunFam" id="3.30.70.1660:FF:000004">
    <property type="entry name" value="Peptide chain release factor 1"/>
    <property type="match status" value="1"/>
</dbReference>
<dbReference type="Gene3D" id="3.30.160.20">
    <property type="match status" value="1"/>
</dbReference>
<dbReference type="Gene3D" id="3.30.70.1660">
    <property type="match status" value="2"/>
</dbReference>
<dbReference type="Gene3D" id="6.10.140.1950">
    <property type="match status" value="1"/>
</dbReference>
<dbReference type="HAMAP" id="MF_00093">
    <property type="entry name" value="Rel_fac_1"/>
    <property type="match status" value="1"/>
</dbReference>
<dbReference type="InterPro" id="IPR005139">
    <property type="entry name" value="PCRF"/>
</dbReference>
<dbReference type="InterPro" id="IPR000352">
    <property type="entry name" value="Pep_chain_release_fac_I"/>
</dbReference>
<dbReference type="InterPro" id="IPR045853">
    <property type="entry name" value="Pep_chain_release_fac_I_sf"/>
</dbReference>
<dbReference type="InterPro" id="IPR050057">
    <property type="entry name" value="Prokaryotic/Mito_RF"/>
</dbReference>
<dbReference type="InterPro" id="IPR004373">
    <property type="entry name" value="RF-1"/>
</dbReference>
<dbReference type="NCBIfam" id="TIGR00019">
    <property type="entry name" value="prfA"/>
    <property type="match status" value="1"/>
</dbReference>
<dbReference type="NCBIfam" id="NF001859">
    <property type="entry name" value="PRK00591.1"/>
    <property type="match status" value="1"/>
</dbReference>
<dbReference type="PANTHER" id="PTHR43804">
    <property type="entry name" value="LD18447P"/>
    <property type="match status" value="1"/>
</dbReference>
<dbReference type="PANTHER" id="PTHR43804:SF7">
    <property type="entry name" value="LD18447P"/>
    <property type="match status" value="1"/>
</dbReference>
<dbReference type="Pfam" id="PF03462">
    <property type="entry name" value="PCRF"/>
    <property type="match status" value="1"/>
</dbReference>
<dbReference type="Pfam" id="PF00472">
    <property type="entry name" value="RF-1"/>
    <property type="match status" value="1"/>
</dbReference>
<dbReference type="SMART" id="SM00937">
    <property type="entry name" value="PCRF"/>
    <property type="match status" value="1"/>
</dbReference>
<dbReference type="SUPFAM" id="SSF75620">
    <property type="entry name" value="Release factor"/>
    <property type="match status" value="1"/>
</dbReference>
<dbReference type="PROSITE" id="PS00745">
    <property type="entry name" value="RF_PROK_I"/>
    <property type="match status" value="1"/>
</dbReference>
<sequence>MKPSIVAKLEALHERHEEVQALLGDAGIIADQDRFRALSREYAQLSDVSRCFTDWQQVQDDIETAQMMLDDPEMREMAQEELREAKEKSEQLEQQLQVLLLPKDPDDERNAFLEVRAGTGGDEAALFAGDLFRMYSRYAEARRWRVEIMSMSEGEHGGYKEIIAKISGDGVYGRLKFESGGHRVQRVPATESQGRIHTSACTVAVMPELPEAELPDINPADLRIDTFRSSGAGGQHVNTTDSAIRITHLPTGIVVECQDERSQHKNKAKALSVLGARIHAAETAKRQQAEASTRRNLLGSGDRSDRNRTYNFPQGRVTDHRINLTLYRLDETMEGKLDMLIEPIVQEHQADLLAALSEQE</sequence>
<evidence type="ECO:0000255" key="1">
    <source>
        <dbReference type="HAMAP-Rule" id="MF_00093"/>
    </source>
</evidence>
<evidence type="ECO:0000256" key="2">
    <source>
        <dbReference type="SAM" id="MobiDB-lite"/>
    </source>
</evidence>
<accession>B5FU19</accession>
<reference key="1">
    <citation type="journal article" date="2011" name="J. Bacteriol.">
        <title>Comparative genomics of 28 Salmonella enterica isolates: evidence for CRISPR-mediated adaptive sublineage evolution.</title>
        <authorList>
            <person name="Fricke W.F."/>
            <person name="Mammel M.K."/>
            <person name="McDermott P.F."/>
            <person name="Tartera C."/>
            <person name="White D.G."/>
            <person name="Leclerc J.E."/>
            <person name="Ravel J."/>
            <person name="Cebula T.A."/>
        </authorList>
    </citation>
    <scope>NUCLEOTIDE SEQUENCE [LARGE SCALE GENOMIC DNA]</scope>
    <source>
        <strain>CT_02021853</strain>
    </source>
</reference>